<keyword id="KW-0030">Aminoacyl-tRNA synthetase</keyword>
<keyword id="KW-0067">ATP-binding</keyword>
<keyword id="KW-0963">Cytoplasm</keyword>
<keyword id="KW-0436">Ligase</keyword>
<keyword id="KW-0547">Nucleotide-binding</keyword>
<keyword id="KW-0648">Protein biosynthesis</keyword>
<keyword id="KW-1185">Reference proteome</keyword>
<gene>
    <name type="ordered locus">ECU02_1210</name>
</gene>
<name>SYEC_ENCCU</name>
<sequence>MDGKSEFKEELINYILLKKYGKGAQDPPVYSNALKKAPQEMFPPGLVDALDSYSINLSRSEGVEFLVLLNSLVNDIRSEEVKDIIFGMINTNQMLTKLMKDKKEVERFPDTCKMYSEQFKANKPLLKEFNAGSRKEQGNLEIGEPSENVVTRFPPEPNGRLHIGHARAALLNWYFASKGNGRLLVRFDDTNPEKEEERFERGILSDLSLLGINEYTLSHTSDYFDKIIDLGVFLIGEGKAYADNTPQEVMRDERGRGVESRCRSMDVEESKRIFKEMARGNASGYCLRAKIDMSSSNKAMRDPVIFRVNESPHHRTGDKYKVYPTYDFACPIVDSLEGITLSLRANEYRDRNQQYYWFIDNLRLRNRPKIHDFSRLNFENTVLSKRKLKYYVDNGFVSGWDDPRLATIAGIKRLGMNMEALREYILMQGVSQKTCTISWDKVWAINRKKIDPVSARYFCVQQRDAVEVSIDNTSEYTMDVPKHKKNGDLGTKEVFYSSQILLSQEDGRVLQDNEEFTLMNWGNAIVKSKTVENGTVTKMEVSLNPDGDFKLTKNKMSWVSKRGSVTVELAEYGNLMNDEDTEDLALRFNRNSVKKEYWYAESAIINVREGEVIQFERNGFYYCDGFLVFNLLPFTKQKRTGN</sequence>
<organism>
    <name type="scientific">Encephalitozoon cuniculi (strain GB-M1)</name>
    <name type="common">Microsporidian parasite</name>
    <dbReference type="NCBI Taxonomy" id="284813"/>
    <lineage>
        <taxon>Eukaryota</taxon>
        <taxon>Fungi</taxon>
        <taxon>Fungi incertae sedis</taxon>
        <taxon>Microsporidia</taxon>
        <taxon>Unikaryonidae</taxon>
        <taxon>Encephalitozoon</taxon>
    </lineage>
</organism>
<comment type="catalytic activity">
    <reaction>
        <text>tRNA(Glu) + L-glutamate + ATP = L-glutamyl-tRNA(Glu) + AMP + diphosphate</text>
        <dbReference type="Rhea" id="RHEA:23540"/>
        <dbReference type="Rhea" id="RHEA-COMP:9663"/>
        <dbReference type="Rhea" id="RHEA-COMP:9680"/>
        <dbReference type="ChEBI" id="CHEBI:29985"/>
        <dbReference type="ChEBI" id="CHEBI:30616"/>
        <dbReference type="ChEBI" id="CHEBI:33019"/>
        <dbReference type="ChEBI" id="CHEBI:78442"/>
        <dbReference type="ChEBI" id="CHEBI:78520"/>
        <dbReference type="ChEBI" id="CHEBI:456215"/>
        <dbReference type="EC" id="6.1.1.17"/>
    </reaction>
</comment>
<comment type="subcellular location">
    <subcellularLocation>
        <location evidence="1">Cytoplasm</location>
    </subcellularLocation>
</comment>
<comment type="similarity">
    <text evidence="2">Belongs to the class-I aminoacyl-tRNA synthetase family. Glutamate--tRNA ligase type 2 subfamily.</text>
</comment>
<feature type="chain" id="PRO_0000388391" description="Probable glutamate--tRNA ligase, cytoplasmic">
    <location>
        <begin position="1"/>
        <end position="642"/>
    </location>
</feature>
<feature type="short sequence motif" description="'HIGH' region" evidence="1">
    <location>
        <begin position="157"/>
        <end position="166"/>
    </location>
</feature>
<feature type="short sequence motif" description="'KMSKS' region" evidence="1">
    <location>
        <begin position="382"/>
        <end position="386"/>
    </location>
</feature>
<feature type="binding site" evidence="1">
    <location>
        <begin position="152"/>
        <end position="154"/>
    </location>
    <ligand>
        <name>L-glutamate</name>
        <dbReference type="ChEBI" id="CHEBI:29985"/>
    </ligand>
</feature>
<feature type="binding site" evidence="1">
    <location>
        <position position="162"/>
    </location>
    <ligand>
        <name>ATP</name>
        <dbReference type="ChEBI" id="CHEBI:30616"/>
    </ligand>
</feature>
<feature type="binding site" evidence="1">
    <location>
        <position position="188"/>
    </location>
    <ligand>
        <name>L-glutamate</name>
        <dbReference type="ChEBI" id="CHEBI:29985"/>
    </ligand>
</feature>
<feature type="binding site" evidence="1">
    <location>
        <begin position="326"/>
        <end position="330"/>
    </location>
    <ligand>
        <name>L-glutamate</name>
        <dbReference type="ChEBI" id="CHEBI:29985"/>
    </ligand>
</feature>
<feature type="binding site" evidence="1">
    <location>
        <position position="344"/>
    </location>
    <ligand>
        <name>L-glutamate</name>
        <dbReference type="ChEBI" id="CHEBI:29985"/>
    </ligand>
</feature>
<feature type="binding site" evidence="1">
    <location>
        <position position="347"/>
    </location>
    <ligand>
        <name>ATP</name>
        <dbReference type="ChEBI" id="CHEBI:30616"/>
    </ligand>
</feature>
<feature type="binding site" evidence="1">
    <location>
        <begin position="382"/>
        <end position="386"/>
    </location>
    <ligand>
        <name>ATP</name>
        <dbReference type="ChEBI" id="CHEBI:30616"/>
    </ligand>
</feature>
<evidence type="ECO:0000250" key="1"/>
<evidence type="ECO:0000305" key="2"/>
<proteinExistence type="inferred from homology"/>
<protein>
    <recommendedName>
        <fullName>Probable glutamate--tRNA ligase, cytoplasmic</fullName>
        <ecNumber>6.1.1.17</ecNumber>
    </recommendedName>
    <alternativeName>
        <fullName>Glutamyl-tRNA synthetase</fullName>
        <shortName>GluRS</shortName>
    </alternativeName>
</protein>
<reference key="1">
    <citation type="journal article" date="2001" name="Nature">
        <title>Genome sequence and gene compaction of the eukaryote parasite Encephalitozoon cuniculi.</title>
        <authorList>
            <person name="Katinka M.D."/>
            <person name="Duprat S."/>
            <person name="Cornillot E."/>
            <person name="Metenier G."/>
            <person name="Thomarat F."/>
            <person name="Prensier G."/>
            <person name="Barbe V."/>
            <person name="Peyretaillade E."/>
            <person name="Brottier P."/>
            <person name="Wincker P."/>
            <person name="Delbac F."/>
            <person name="El Alaoui H."/>
            <person name="Peyret P."/>
            <person name="Saurin W."/>
            <person name="Gouy M."/>
            <person name="Weissenbach J."/>
            <person name="Vivares C.P."/>
        </authorList>
    </citation>
    <scope>NUCLEOTIDE SEQUENCE [LARGE SCALE GENOMIC DNA]</scope>
    <source>
        <strain>GB-M1</strain>
    </source>
</reference>
<accession>Q8SSE4</accession>
<dbReference type="EC" id="6.1.1.17"/>
<dbReference type="EMBL" id="AL590442">
    <property type="protein sequence ID" value="CAD25150.1"/>
    <property type="molecule type" value="Genomic_DNA"/>
</dbReference>
<dbReference type="RefSeq" id="NP_584646.1">
    <property type="nucleotide sequence ID" value="NM_001040835.1"/>
</dbReference>
<dbReference type="SMR" id="Q8SSE4"/>
<dbReference type="FunCoup" id="Q8SSE4">
    <property type="interactions" value="82"/>
</dbReference>
<dbReference type="STRING" id="284813.Q8SSE4"/>
<dbReference type="GeneID" id="858636"/>
<dbReference type="KEGG" id="ecu:ECU02_1210"/>
<dbReference type="VEuPathDB" id="MicrosporidiaDB:ECU02_1210"/>
<dbReference type="HOGENOM" id="CLU_001882_1_2_1"/>
<dbReference type="InParanoid" id="Q8SSE4"/>
<dbReference type="OMA" id="ANRYFFV"/>
<dbReference type="OrthoDB" id="10250478at2759"/>
<dbReference type="Proteomes" id="UP000000819">
    <property type="component" value="Chromosome II"/>
</dbReference>
<dbReference type="GO" id="GO:0005829">
    <property type="term" value="C:cytosol"/>
    <property type="evidence" value="ECO:0007669"/>
    <property type="project" value="TreeGrafter"/>
</dbReference>
<dbReference type="GO" id="GO:0017102">
    <property type="term" value="C:methionyl glutamyl tRNA synthetase complex"/>
    <property type="evidence" value="ECO:0007669"/>
    <property type="project" value="TreeGrafter"/>
</dbReference>
<dbReference type="GO" id="GO:0005524">
    <property type="term" value="F:ATP binding"/>
    <property type="evidence" value="ECO:0007669"/>
    <property type="project" value="UniProtKB-KW"/>
</dbReference>
<dbReference type="GO" id="GO:0004818">
    <property type="term" value="F:glutamate-tRNA ligase activity"/>
    <property type="evidence" value="ECO:0007669"/>
    <property type="project" value="UniProtKB-EC"/>
</dbReference>
<dbReference type="GO" id="GO:0006424">
    <property type="term" value="P:glutamyl-tRNA aminoacylation"/>
    <property type="evidence" value="ECO:0007669"/>
    <property type="project" value="InterPro"/>
</dbReference>
<dbReference type="CDD" id="cd00807">
    <property type="entry name" value="GlnRS_core"/>
    <property type="match status" value="1"/>
</dbReference>
<dbReference type="FunFam" id="1.10.1160.10:FF:000001">
    <property type="entry name" value="Glutamine--tRNA ligase"/>
    <property type="match status" value="1"/>
</dbReference>
<dbReference type="FunFam" id="3.90.800.10:FF:000001">
    <property type="entry name" value="Glutamine--tRNA ligase"/>
    <property type="match status" value="1"/>
</dbReference>
<dbReference type="FunFam" id="3.40.50.620:FF:000037">
    <property type="entry name" value="Glutamine--tRNA ligase cytoplasmic"/>
    <property type="match status" value="1"/>
</dbReference>
<dbReference type="Gene3D" id="1.10.1160.10">
    <property type="entry name" value="Glutamyl-trna Synthetase, Domain 2"/>
    <property type="match status" value="1"/>
</dbReference>
<dbReference type="Gene3D" id="3.90.800.10">
    <property type="entry name" value="Glutamyl-tRNA Synthetase, Domain 3"/>
    <property type="match status" value="1"/>
</dbReference>
<dbReference type="Gene3D" id="3.40.50.620">
    <property type="entry name" value="HUPs"/>
    <property type="match status" value="1"/>
</dbReference>
<dbReference type="Gene3D" id="2.40.240.10">
    <property type="entry name" value="Ribosomal Protein L25, Chain P"/>
    <property type="match status" value="1"/>
</dbReference>
<dbReference type="HAMAP" id="MF_02076">
    <property type="entry name" value="Glu_tRNA_synth_type2"/>
    <property type="match status" value="1"/>
</dbReference>
<dbReference type="InterPro" id="IPR001412">
    <property type="entry name" value="aa-tRNA-synth_I_CS"/>
</dbReference>
<dbReference type="InterPro" id="IPR050132">
    <property type="entry name" value="Gln/Glu-tRNA_Ligase"/>
</dbReference>
<dbReference type="InterPro" id="IPR004526">
    <property type="entry name" value="Glu-tRNA-synth_arc/euk"/>
</dbReference>
<dbReference type="InterPro" id="IPR000924">
    <property type="entry name" value="Glu/Gln-tRNA-synth"/>
</dbReference>
<dbReference type="InterPro" id="IPR020058">
    <property type="entry name" value="Glu/Gln-tRNA-synth_Ib_cat-dom"/>
</dbReference>
<dbReference type="InterPro" id="IPR020059">
    <property type="entry name" value="Glu/Gln-tRNA-synth_Ib_codon-bd"/>
</dbReference>
<dbReference type="InterPro" id="IPR020061">
    <property type="entry name" value="Glu_tRNA_lig_a-bdl"/>
</dbReference>
<dbReference type="InterPro" id="IPR020056">
    <property type="entry name" value="Rbsml_bL25/Gln-tRNA_synth_N"/>
</dbReference>
<dbReference type="InterPro" id="IPR011035">
    <property type="entry name" value="Ribosomal_bL25/Gln-tRNA_synth"/>
</dbReference>
<dbReference type="InterPro" id="IPR014729">
    <property type="entry name" value="Rossmann-like_a/b/a_fold"/>
</dbReference>
<dbReference type="InterPro" id="IPR049437">
    <property type="entry name" value="tRNA-synt_1c_C2"/>
</dbReference>
<dbReference type="NCBIfam" id="TIGR00463">
    <property type="entry name" value="gltX_arch"/>
    <property type="match status" value="1"/>
</dbReference>
<dbReference type="PANTHER" id="PTHR43097:SF5">
    <property type="entry name" value="GLUTAMATE--TRNA LIGASE"/>
    <property type="match status" value="1"/>
</dbReference>
<dbReference type="PANTHER" id="PTHR43097">
    <property type="entry name" value="GLUTAMINE-TRNA LIGASE"/>
    <property type="match status" value="1"/>
</dbReference>
<dbReference type="Pfam" id="PF00749">
    <property type="entry name" value="tRNA-synt_1c"/>
    <property type="match status" value="1"/>
</dbReference>
<dbReference type="Pfam" id="PF03950">
    <property type="entry name" value="tRNA-synt_1c_C"/>
    <property type="match status" value="1"/>
</dbReference>
<dbReference type="Pfam" id="PF20974">
    <property type="entry name" value="tRNA-synt_1c_C2"/>
    <property type="match status" value="1"/>
</dbReference>
<dbReference type="PRINTS" id="PR00987">
    <property type="entry name" value="TRNASYNTHGLU"/>
</dbReference>
<dbReference type="SUPFAM" id="SSF52374">
    <property type="entry name" value="Nucleotidylyl transferase"/>
    <property type="match status" value="1"/>
</dbReference>
<dbReference type="SUPFAM" id="SSF50715">
    <property type="entry name" value="Ribosomal protein L25-like"/>
    <property type="match status" value="1"/>
</dbReference>
<dbReference type="PROSITE" id="PS00178">
    <property type="entry name" value="AA_TRNA_LIGASE_I"/>
    <property type="match status" value="1"/>
</dbReference>